<keyword id="KW-0150">Chloroplast</keyword>
<keyword id="KW-0934">Plastid</keyword>
<keyword id="KW-0687">Ribonucleoprotein</keyword>
<keyword id="KW-0689">Ribosomal protein</keyword>
<keyword id="KW-0694">RNA-binding</keyword>
<keyword id="KW-0699">rRNA-binding</keyword>
<feature type="chain" id="PRO_0000132613" description="Small ribosomal subunit protein uS4c">
    <location>
        <begin position="1" status="less than"/>
        <end position="182" status="greater than"/>
    </location>
</feature>
<feature type="domain" description="S4 RNA-binding">
    <location>
        <begin position="82"/>
        <end position="143"/>
    </location>
</feature>
<feature type="non-terminal residue">
    <location>
        <position position="1"/>
    </location>
</feature>
<feature type="non-terminal residue">
    <location>
        <position position="182"/>
    </location>
</feature>
<organism>
    <name type="scientific">Isophysis tasmanica</name>
    <dbReference type="NCBI Taxonomy" id="49752"/>
    <lineage>
        <taxon>Eukaryota</taxon>
        <taxon>Viridiplantae</taxon>
        <taxon>Streptophyta</taxon>
        <taxon>Embryophyta</taxon>
        <taxon>Tracheophyta</taxon>
        <taxon>Spermatophyta</taxon>
        <taxon>Magnoliopsida</taxon>
        <taxon>Liliopsida</taxon>
        <taxon>Asparagales</taxon>
        <taxon>Iridaceae</taxon>
        <taxon>Isophysidoideae</taxon>
        <taxon>Isophysis</taxon>
    </lineage>
</organism>
<reference key="1">
    <citation type="journal article" date="1997" name="Plant Syst. Evol.">
        <title>Phylogenetic analysis of Iridaceae with parsimony and distance methods using the plastid gene rps4.</title>
        <authorList>
            <person name="Souza-Chies T.T."/>
            <person name="Bittar G."/>
            <person name="Nadot S."/>
            <person name="Carter L."/>
            <person name="Besin E."/>
            <person name="Lejeune B.P."/>
        </authorList>
    </citation>
    <scope>NUCLEOTIDE SEQUENCE [GENOMIC DNA]</scope>
</reference>
<accession>O20236</accession>
<protein>
    <recommendedName>
        <fullName evidence="2">Small ribosomal subunit protein uS4c</fullName>
    </recommendedName>
    <alternativeName>
        <fullName>30S ribosomal protein S4, chloroplastic</fullName>
    </alternativeName>
</protein>
<name>RR4_ISOTA</name>
<sequence>RFKKIRRLGALPGLTSKRPRSGSDLKNQLRSGKRSQYRIRLEEKQKLRFHYGLTERQLLRYVHIAGKAKGSTGQVLLQLLEMRLDNILFRLGMASTIPGARQLVNHRHILVNGRIVDIPSYRCKPRDIITTKDKQRSKALIQNYIASSPHEELPNHLTIDPFQYKGLVNQIIDSKWIGLKIN</sequence>
<evidence type="ECO:0000250" key="1"/>
<evidence type="ECO:0000305" key="2"/>
<geneLocation type="chloroplast"/>
<dbReference type="EMBL" id="Z68243">
    <property type="protein sequence ID" value="CAA92541.1"/>
    <property type="molecule type" value="Genomic_DNA"/>
</dbReference>
<dbReference type="SMR" id="O20236"/>
<dbReference type="GO" id="GO:0009507">
    <property type="term" value="C:chloroplast"/>
    <property type="evidence" value="ECO:0007669"/>
    <property type="project" value="UniProtKB-SubCell"/>
</dbReference>
<dbReference type="GO" id="GO:0015935">
    <property type="term" value="C:small ribosomal subunit"/>
    <property type="evidence" value="ECO:0007669"/>
    <property type="project" value="InterPro"/>
</dbReference>
<dbReference type="GO" id="GO:0019843">
    <property type="term" value="F:rRNA binding"/>
    <property type="evidence" value="ECO:0007669"/>
    <property type="project" value="UniProtKB-KW"/>
</dbReference>
<dbReference type="GO" id="GO:0003735">
    <property type="term" value="F:structural constituent of ribosome"/>
    <property type="evidence" value="ECO:0007669"/>
    <property type="project" value="InterPro"/>
</dbReference>
<dbReference type="GO" id="GO:0042274">
    <property type="term" value="P:ribosomal small subunit biogenesis"/>
    <property type="evidence" value="ECO:0007669"/>
    <property type="project" value="TreeGrafter"/>
</dbReference>
<dbReference type="GO" id="GO:0006412">
    <property type="term" value="P:translation"/>
    <property type="evidence" value="ECO:0007669"/>
    <property type="project" value="InterPro"/>
</dbReference>
<dbReference type="CDD" id="cd00165">
    <property type="entry name" value="S4"/>
    <property type="match status" value="1"/>
</dbReference>
<dbReference type="FunFam" id="1.10.1050.10:FF:000002">
    <property type="entry name" value="30S ribosomal protein S4, chloroplastic"/>
    <property type="match status" value="1"/>
</dbReference>
<dbReference type="FunFam" id="3.10.290.10:FF:000081">
    <property type="entry name" value="30S ribosomal protein S4, chloroplastic"/>
    <property type="match status" value="1"/>
</dbReference>
<dbReference type="Gene3D" id="1.10.1050.10">
    <property type="entry name" value="Ribosomal Protein S4 Delta 41, Chain A, domain 1"/>
    <property type="match status" value="1"/>
</dbReference>
<dbReference type="Gene3D" id="3.10.290.10">
    <property type="entry name" value="RNA-binding S4 domain"/>
    <property type="match status" value="1"/>
</dbReference>
<dbReference type="HAMAP" id="MF_01306_B">
    <property type="entry name" value="Ribosomal_uS4_B"/>
    <property type="match status" value="1"/>
</dbReference>
<dbReference type="InterPro" id="IPR022801">
    <property type="entry name" value="Ribosomal_uS4"/>
</dbReference>
<dbReference type="InterPro" id="IPR005709">
    <property type="entry name" value="Ribosomal_uS4_bac-type"/>
</dbReference>
<dbReference type="InterPro" id="IPR018079">
    <property type="entry name" value="Ribosomal_uS4_CS"/>
</dbReference>
<dbReference type="InterPro" id="IPR001912">
    <property type="entry name" value="Ribosomal_uS4_N"/>
</dbReference>
<dbReference type="InterPro" id="IPR002942">
    <property type="entry name" value="S4_RNA-bd"/>
</dbReference>
<dbReference type="InterPro" id="IPR036986">
    <property type="entry name" value="S4_RNA-bd_sf"/>
</dbReference>
<dbReference type="NCBIfam" id="NF003717">
    <property type="entry name" value="PRK05327.1"/>
    <property type="match status" value="1"/>
</dbReference>
<dbReference type="NCBIfam" id="TIGR01017">
    <property type="entry name" value="rpsD_bact"/>
    <property type="match status" value="1"/>
</dbReference>
<dbReference type="PANTHER" id="PTHR11831">
    <property type="entry name" value="30S 40S RIBOSOMAL PROTEIN"/>
    <property type="match status" value="1"/>
</dbReference>
<dbReference type="PANTHER" id="PTHR11831:SF4">
    <property type="entry name" value="SMALL RIBOSOMAL SUBUNIT PROTEIN US4M"/>
    <property type="match status" value="1"/>
</dbReference>
<dbReference type="Pfam" id="PF00163">
    <property type="entry name" value="Ribosomal_S4"/>
    <property type="match status" value="1"/>
</dbReference>
<dbReference type="Pfam" id="PF01479">
    <property type="entry name" value="S4"/>
    <property type="match status" value="1"/>
</dbReference>
<dbReference type="SMART" id="SM01390">
    <property type="entry name" value="Ribosomal_S4"/>
    <property type="match status" value="1"/>
</dbReference>
<dbReference type="SMART" id="SM00363">
    <property type="entry name" value="S4"/>
    <property type="match status" value="1"/>
</dbReference>
<dbReference type="SUPFAM" id="SSF55174">
    <property type="entry name" value="Alpha-L RNA-binding motif"/>
    <property type="match status" value="1"/>
</dbReference>
<dbReference type="PROSITE" id="PS00632">
    <property type="entry name" value="RIBOSOMAL_S4"/>
    <property type="match status" value="1"/>
</dbReference>
<dbReference type="PROSITE" id="PS50889">
    <property type="entry name" value="S4"/>
    <property type="match status" value="1"/>
</dbReference>
<proteinExistence type="inferred from homology"/>
<gene>
    <name type="primary">rps4</name>
</gene>
<comment type="function">
    <text evidence="1">One of the primary rRNA binding proteins, it binds directly to 16S rRNA where it nucleates assembly of the body of the 30S subunit.</text>
</comment>
<comment type="function">
    <text evidence="1">With S5 and S12 plays an important role in translational accuracy.</text>
</comment>
<comment type="subunit">
    <text evidence="1">Part of the 30S ribosomal subunit. Contacts protein S5. The interaction surface between S4 and S5 is involved in control of translational fidelity (By similarity).</text>
</comment>
<comment type="subcellular location">
    <subcellularLocation>
        <location>Plastid</location>
        <location>Chloroplast</location>
    </subcellularLocation>
</comment>
<comment type="similarity">
    <text evidence="2">Belongs to the universal ribosomal protein uS4 family.</text>
</comment>